<organism>
    <name type="scientific">Shigella boydii serotype 4 (strain Sb227)</name>
    <dbReference type="NCBI Taxonomy" id="300268"/>
    <lineage>
        <taxon>Bacteria</taxon>
        <taxon>Pseudomonadati</taxon>
        <taxon>Pseudomonadota</taxon>
        <taxon>Gammaproteobacteria</taxon>
        <taxon>Enterobacterales</taxon>
        <taxon>Enterobacteriaceae</taxon>
        <taxon>Shigella</taxon>
    </lineage>
</organism>
<comment type="similarity">
    <text evidence="1">Belongs to the Smg family.</text>
</comment>
<gene>
    <name evidence="1" type="primary">smg</name>
    <name type="ordered locus">SBO_3278</name>
</gene>
<name>SMG_SHIBS</name>
<feature type="chain" id="PRO_1000025673" description="Protein Smg">
    <location>
        <begin position="1"/>
        <end position="157"/>
    </location>
</feature>
<accession>Q31VZ2</accession>
<sequence>MFDVLMYLFETYIHTEAELRVDQDKLEQDLTDAGFEREDIYNALLWLEKLADYQEGLAEPMQLASDPLSMRIYTPEECERLDASCRGFLLFLEQIQVLNLETREMVIERVLALDNAEFELDDLKWVILMVLFNIPGCENAYQQMEELLFEVNEGMLH</sequence>
<proteinExistence type="inferred from homology"/>
<reference key="1">
    <citation type="journal article" date="2005" name="Nucleic Acids Res.">
        <title>Genome dynamics and diversity of Shigella species, the etiologic agents of bacillary dysentery.</title>
        <authorList>
            <person name="Yang F."/>
            <person name="Yang J."/>
            <person name="Zhang X."/>
            <person name="Chen L."/>
            <person name="Jiang Y."/>
            <person name="Yan Y."/>
            <person name="Tang X."/>
            <person name="Wang J."/>
            <person name="Xiong Z."/>
            <person name="Dong J."/>
            <person name="Xue Y."/>
            <person name="Zhu Y."/>
            <person name="Xu X."/>
            <person name="Sun L."/>
            <person name="Chen S."/>
            <person name="Nie H."/>
            <person name="Peng J."/>
            <person name="Xu J."/>
            <person name="Wang Y."/>
            <person name="Yuan Z."/>
            <person name="Wen Y."/>
            <person name="Yao Z."/>
            <person name="Shen Y."/>
            <person name="Qiang B."/>
            <person name="Hou Y."/>
            <person name="Yu J."/>
            <person name="Jin Q."/>
        </authorList>
    </citation>
    <scope>NUCLEOTIDE SEQUENCE [LARGE SCALE GENOMIC DNA]</scope>
    <source>
        <strain>Sb227</strain>
    </source>
</reference>
<dbReference type="EMBL" id="CP000036">
    <property type="protein sequence ID" value="ABB67766.1"/>
    <property type="molecule type" value="Genomic_DNA"/>
</dbReference>
<dbReference type="RefSeq" id="WP_000460680.1">
    <property type="nucleotide sequence ID" value="NC_007613.1"/>
</dbReference>
<dbReference type="SMR" id="Q31VZ2"/>
<dbReference type="GeneID" id="93778703"/>
<dbReference type="KEGG" id="sbo:SBO_3278"/>
<dbReference type="HOGENOM" id="CLU_133242_0_0_6"/>
<dbReference type="Proteomes" id="UP000007067">
    <property type="component" value="Chromosome"/>
</dbReference>
<dbReference type="HAMAP" id="MF_00598">
    <property type="entry name" value="Smg"/>
    <property type="match status" value="1"/>
</dbReference>
<dbReference type="InterPro" id="IPR007456">
    <property type="entry name" value="Smg"/>
</dbReference>
<dbReference type="NCBIfam" id="NF002897">
    <property type="entry name" value="PRK03430.1"/>
    <property type="match status" value="1"/>
</dbReference>
<dbReference type="PANTHER" id="PTHR38692">
    <property type="entry name" value="PROTEIN SMG"/>
    <property type="match status" value="1"/>
</dbReference>
<dbReference type="PANTHER" id="PTHR38692:SF1">
    <property type="entry name" value="PROTEIN SMG"/>
    <property type="match status" value="1"/>
</dbReference>
<dbReference type="Pfam" id="PF04361">
    <property type="entry name" value="DUF494"/>
    <property type="match status" value="1"/>
</dbReference>
<evidence type="ECO:0000255" key="1">
    <source>
        <dbReference type="HAMAP-Rule" id="MF_00598"/>
    </source>
</evidence>
<protein>
    <recommendedName>
        <fullName evidence="1">Protein Smg</fullName>
    </recommendedName>
</protein>